<accession>Q54UK7</accession>
<name>HSL51_DICDI</name>
<sequence>MTLFSSISSISNPMTNSKSRISSFGSGTSMGSNSIACGGGCGGGSGGILGLGLGLGLNLFGGSRGACGGNSGSSNPGNGPCSGGKCCGGSCCGI</sequence>
<proteinExistence type="inferred from homology"/>
<organism>
    <name type="scientific">Dictyostelium discoideum</name>
    <name type="common">Social amoeba</name>
    <dbReference type="NCBI Taxonomy" id="44689"/>
    <lineage>
        <taxon>Eukaryota</taxon>
        <taxon>Amoebozoa</taxon>
        <taxon>Evosea</taxon>
        <taxon>Eumycetozoa</taxon>
        <taxon>Dictyostelia</taxon>
        <taxon>Dictyosteliales</taxon>
        <taxon>Dictyosteliaceae</taxon>
        <taxon>Dictyostelium</taxon>
    </lineage>
</organism>
<evidence type="ECO:0000256" key="1">
    <source>
        <dbReference type="SAM" id="MobiDB-lite"/>
    </source>
</evidence>
<evidence type="ECO:0000305" key="2"/>
<keyword id="KW-1185">Reference proteome</keyword>
<reference key="1">
    <citation type="journal article" date="2005" name="Nature">
        <title>The genome of the social amoeba Dictyostelium discoideum.</title>
        <authorList>
            <person name="Eichinger L."/>
            <person name="Pachebat J.A."/>
            <person name="Gloeckner G."/>
            <person name="Rajandream M.A."/>
            <person name="Sucgang R."/>
            <person name="Berriman M."/>
            <person name="Song J."/>
            <person name="Olsen R."/>
            <person name="Szafranski K."/>
            <person name="Xu Q."/>
            <person name="Tunggal B."/>
            <person name="Kummerfeld S."/>
            <person name="Madera M."/>
            <person name="Konfortov B.A."/>
            <person name="Rivero F."/>
            <person name="Bankier A.T."/>
            <person name="Lehmann R."/>
            <person name="Hamlin N."/>
            <person name="Davies R."/>
            <person name="Gaudet P."/>
            <person name="Fey P."/>
            <person name="Pilcher K."/>
            <person name="Chen G."/>
            <person name="Saunders D."/>
            <person name="Sodergren E.J."/>
            <person name="Davis P."/>
            <person name="Kerhornou A."/>
            <person name="Nie X."/>
            <person name="Hall N."/>
            <person name="Anjard C."/>
            <person name="Hemphill L."/>
            <person name="Bason N."/>
            <person name="Farbrother P."/>
            <person name="Desany B."/>
            <person name="Just E."/>
            <person name="Morio T."/>
            <person name="Rost R."/>
            <person name="Churcher C.M."/>
            <person name="Cooper J."/>
            <person name="Haydock S."/>
            <person name="van Driessche N."/>
            <person name="Cronin A."/>
            <person name="Goodhead I."/>
            <person name="Muzny D.M."/>
            <person name="Mourier T."/>
            <person name="Pain A."/>
            <person name="Lu M."/>
            <person name="Harper D."/>
            <person name="Lindsay R."/>
            <person name="Hauser H."/>
            <person name="James K.D."/>
            <person name="Quiles M."/>
            <person name="Madan Babu M."/>
            <person name="Saito T."/>
            <person name="Buchrieser C."/>
            <person name="Wardroper A."/>
            <person name="Felder M."/>
            <person name="Thangavelu M."/>
            <person name="Johnson D."/>
            <person name="Knights A."/>
            <person name="Loulseged H."/>
            <person name="Mungall K.L."/>
            <person name="Oliver K."/>
            <person name="Price C."/>
            <person name="Quail M.A."/>
            <person name="Urushihara H."/>
            <person name="Hernandez J."/>
            <person name="Rabbinowitsch E."/>
            <person name="Steffen D."/>
            <person name="Sanders M."/>
            <person name="Ma J."/>
            <person name="Kohara Y."/>
            <person name="Sharp S."/>
            <person name="Simmonds M.N."/>
            <person name="Spiegler S."/>
            <person name="Tivey A."/>
            <person name="Sugano S."/>
            <person name="White B."/>
            <person name="Walker D."/>
            <person name="Woodward J.R."/>
            <person name="Winckler T."/>
            <person name="Tanaka Y."/>
            <person name="Shaulsky G."/>
            <person name="Schleicher M."/>
            <person name="Weinstock G.M."/>
            <person name="Rosenthal A."/>
            <person name="Cox E.C."/>
            <person name="Chisholm R.L."/>
            <person name="Gibbs R.A."/>
            <person name="Loomis W.F."/>
            <person name="Platzer M."/>
            <person name="Kay R.R."/>
            <person name="Williams J.G."/>
            <person name="Dear P.H."/>
            <person name="Noegel A.A."/>
            <person name="Barrell B.G."/>
            <person name="Kuspa A."/>
        </authorList>
    </citation>
    <scope>NUCLEOTIDE SEQUENCE [LARGE SCALE GENOMIC DNA]</scope>
    <source>
        <strain>AX4</strain>
    </source>
</reference>
<feature type="chain" id="PRO_0000330419" description="HssA/B-like protein 51">
    <location>
        <begin position="1"/>
        <end position="94"/>
    </location>
</feature>
<feature type="region of interest" description="Disordered" evidence="1">
    <location>
        <begin position="1"/>
        <end position="25"/>
    </location>
</feature>
<comment type="similarity">
    <text evidence="2">Belongs to the hssA/B family.</text>
</comment>
<dbReference type="EMBL" id="AAFI02000040">
    <property type="protein sequence ID" value="EAL66805.1"/>
    <property type="molecule type" value="Genomic_DNA"/>
</dbReference>
<dbReference type="RefSeq" id="XP_640769.1">
    <property type="nucleotide sequence ID" value="XM_635677.1"/>
</dbReference>
<dbReference type="PaxDb" id="44689-DDB0252773"/>
<dbReference type="EnsemblProtists" id="EAL66805">
    <property type="protein sequence ID" value="EAL66805"/>
    <property type="gene ID" value="DDB_G0281017"/>
</dbReference>
<dbReference type="GeneID" id="8622822"/>
<dbReference type="KEGG" id="ddi:DDB_G0281017"/>
<dbReference type="dictyBase" id="DDB_G0281017"/>
<dbReference type="HOGENOM" id="CLU_181850_0_0_1"/>
<dbReference type="InParanoid" id="Q54UK7"/>
<dbReference type="PRO" id="PR:Q54UK7"/>
<dbReference type="Proteomes" id="UP000002195">
    <property type="component" value="Chromosome 3"/>
</dbReference>
<dbReference type="GO" id="GO:0030587">
    <property type="term" value="P:sorocarp development"/>
    <property type="evidence" value="ECO:0000318"/>
    <property type="project" value="GO_Central"/>
</dbReference>
<dbReference type="InterPro" id="IPR050533">
    <property type="entry name" value="HssA/B-like_chaperone"/>
</dbReference>
<dbReference type="InterPro" id="IPR008455">
    <property type="entry name" value="HssA/B-related"/>
</dbReference>
<dbReference type="PANTHER" id="PTHR31059">
    <property type="entry name" value="HSSA/B-LIKE PROTEIN 1-RELATED-RELATED"/>
    <property type="match status" value="1"/>
</dbReference>
<dbReference type="PANTHER" id="PTHR31059:SF5">
    <property type="entry name" value="HSSA_B-LIKE PROTEIN 1-RELATED"/>
    <property type="match status" value="1"/>
</dbReference>
<dbReference type="Pfam" id="PF05710">
    <property type="entry name" value="Coiled"/>
    <property type="match status" value="1"/>
</dbReference>
<gene>
    <name type="primary">hssl51</name>
    <name type="ORF">DDB_G0281017</name>
</gene>
<protein>
    <recommendedName>
        <fullName>HssA/B-like protein 51</fullName>
    </recommendedName>
</protein>